<keyword id="KW-0240">DNA-directed RNA polymerase</keyword>
<keyword id="KW-0479">Metal-binding</keyword>
<keyword id="KW-0548">Nucleotidyltransferase</keyword>
<keyword id="KW-1185">Reference proteome</keyword>
<keyword id="KW-0804">Transcription</keyword>
<keyword id="KW-0808">Transferase</keyword>
<keyword id="KW-0946">Virion</keyword>
<comment type="function">
    <text evidence="1">Part of the DNA-dependent RNA polymerase which catalyzes the transcription of viral DNA into RNA using the four ribonucleoside triphosphates as substrates. Responsible for the transcription of early, intermediate and late genes. DNA-dependent RNA polymerase associates with the early transcription factor (ETF), itself composed of D6 and A7, thereby allowing the early genes transcription. Late transcription, and probably also intermediate transcription, require newly synthesized RNA polymerase (By similarity).</text>
</comment>
<comment type="catalytic activity">
    <reaction>
        <text>RNA(n) + a ribonucleoside 5'-triphosphate = RNA(n+1) + diphosphate</text>
        <dbReference type="Rhea" id="RHEA:21248"/>
        <dbReference type="Rhea" id="RHEA-COMP:14527"/>
        <dbReference type="Rhea" id="RHEA-COMP:17342"/>
        <dbReference type="ChEBI" id="CHEBI:33019"/>
        <dbReference type="ChEBI" id="CHEBI:61557"/>
        <dbReference type="ChEBI" id="CHEBI:140395"/>
        <dbReference type="EC" id="2.7.7.6"/>
    </reaction>
</comment>
<comment type="subunit">
    <text evidence="1">The DNA-dependent RNA polymerase used for intermediate and late genes expression consists of eight subunits (147) kDa, (133) kDa, (35) kDa, (30) kDa, (22) kDa, (19) kDa, (18) kDa and (7) kDa totalling more than 500 kDa in mass. The same holoenzyme, with the addition of the transcription-specificity factor RAP94, is used for early gene expression (By similarity).</text>
</comment>
<comment type="subcellular location">
    <subcellularLocation>
        <location evidence="1">Virion</location>
    </subcellularLocation>
    <text evidence="1">All the enzymes and other proteins required to synthesize early mRNAs are packaged within the virion core along with the DNA genome. This is necessary because viral early mRNAs are synthesized within minutes after virus entry into the cell and are extruded through pores in the core particle (By similarity).</text>
</comment>
<comment type="similarity">
    <text evidence="2">Belongs to the RNA polymerase beta chain family.</text>
</comment>
<proteinExistence type="inferred from homology"/>
<reference key="1">
    <citation type="journal article" date="2002" name="J. Gen. Virol.">
        <title>The sequence of camelpox virus shows it is most closely related to variola virus, the cause of smallpox.</title>
        <authorList>
            <person name="Gubser C."/>
            <person name="Smith G.L."/>
        </authorList>
    </citation>
    <scope>NUCLEOTIDE SEQUENCE [LARGE SCALE GENOMIC DNA]</scope>
</reference>
<sequence>MKKNTDSEMDQRLGYKFLVPDPKAGVFYRPLHFQYVSYSNFILHRLHEILTVKRPLLSFKNNTERIMIEISNVKVTPPDYSPIIASIKGKSYDALATFTVNIFKEVMTKEGISITKISSYEGKDSHLIKIPLLIGYGNKNPLDTAKYLVPNVIGGVFINKQSVEKVGINLVEKITTWPKFRVVKPNSFTFSFSSVSPPNVLPTRYRHYKISLDISQLEASNISSTKTFITVNIVLLSQYLSRVSLEFIRRSLSYDMPPEVVYLVNAIIDSAKRLTESITDFNIDTYINDLVEAEHIKQKSQLTINEFKYEMLYNFLPHMNYTPDQLKGFYMISLLRKFLYCIYHTSRYPDRDSMVCHRILTYGKYFETLAHDELENYIGNIRNDIMNNHKNRGTYAVNIHVLTTPGLNHAFSSLLSGKFKKSDGSYRTHPHYSWMQNISIPRSVGFYPDQVKISKMFSVRKYHPSQYLYFCSSDVPERGPQVGLVSQLSVLSSITNILTSEYLDLEKKICEYIRSYYKDDISYFETGFPITIENALVASLNPNMICDFVTDFRRRKRMGFFGNLEVGITLVRDHMNEIRINIGAGRLVRPFLVVDNGELMMDVCPELESRLDDMTFSDIQKEFPHVIEMVDIEQFTFSNVCESVQKFRMMSKDERKQYDLCDFPAEFRDGYVASSLVGINHNSGPRAILGCAQAKQAISCLSSDIRNKIDNGIHLMYPERPIVISKALETSKIAANCFGQHVTIALMSYKGINQEDGIIIKKQFIQRGGLDIVTAKKHQVEIPLENFNNKERDRSNAYSKLESNGLVRLNAFLESGDAMARNISSRTLEDDFARDNQISFDVSEKYTDMYKSRVERVQVELTDKVKVRVLTMKERRPILGDKFTTRTSQKGTVAYIADETELPYDENGITPDVIINSTSIFSRKTISMLIEVILTAAYSVKPYNNKGENRPVCFPSSNETSIDTYMQFAKQCYEHSNPKLSEEELSDKIFCEKILYDPETDKPYGSKVFFGPIYYLRLRHLTQDKATVRCRGKKTKLIRQANEGRKRGGGIKFGEMERDCLIAHGAANTITEVLKDSEEDYQDVYICENCGDIAAQIKSINTCLRCSKLNLSPLLTKIDTTHVSKVFLTQMNARGVKVKLDFERRPPSFYKPLDKVDLKPSFLK</sequence>
<gene>
    <name type="primary">RPO132</name>
    <name type="ordered locus">CMP141R</name>
</gene>
<evidence type="ECO:0000250" key="1"/>
<evidence type="ECO:0000305" key="2"/>
<accession>Q775Q3</accession>
<feature type="chain" id="PRO_0000048064" description="DNA-directed RNA polymerase 132 kDa polypeptide">
    <location>
        <begin position="1"/>
        <end position="1164"/>
    </location>
</feature>
<protein>
    <recommendedName>
        <fullName>DNA-directed RNA polymerase 132 kDa polypeptide</fullName>
        <ecNumber>2.7.7.6</ecNumber>
    </recommendedName>
</protein>
<name>RP132_CAMPS</name>
<organismHost>
    <name type="scientific">Camelus</name>
    <dbReference type="NCBI Taxonomy" id="9836"/>
</organismHost>
<organism>
    <name type="scientific">Camelpox virus (strain CMS)</name>
    <dbReference type="NCBI Taxonomy" id="203172"/>
    <lineage>
        <taxon>Viruses</taxon>
        <taxon>Varidnaviria</taxon>
        <taxon>Bamfordvirae</taxon>
        <taxon>Nucleocytoviricota</taxon>
        <taxon>Pokkesviricetes</taxon>
        <taxon>Chitovirales</taxon>
        <taxon>Poxviridae</taxon>
        <taxon>Chordopoxvirinae</taxon>
        <taxon>Orthopoxvirus</taxon>
        <taxon>Camelpox virus</taxon>
    </lineage>
</organism>
<dbReference type="EC" id="2.7.7.6"/>
<dbReference type="EMBL" id="AY009089">
    <property type="protein sequence ID" value="AAG37633.1"/>
    <property type="molecule type" value="Genomic_DNA"/>
</dbReference>
<dbReference type="SMR" id="Q775Q3"/>
<dbReference type="Proteomes" id="UP000107153">
    <property type="component" value="Genome"/>
</dbReference>
<dbReference type="GO" id="GO:0000428">
    <property type="term" value="C:DNA-directed RNA polymerase complex"/>
    <property type="evidence" value="ECO:0007669"/>
    <property type="project" value="UniProtKB-KW"/>
</dbReference>
<dbReference type="GO" id="GO:0044423">
    <property type="term" value="C:virion component"/>
    <property type="evidence" value="ECO:0007669"/>
    <property type="project" value="UniProtKB-KW"/>
</dbReference>
<dbReference type="GO" id="GO:0003677">
    <property type="term" value="F:DNA binding"/>
    <property type="evidence" value="ECO:0007669"/>
    <property type="project" value="InterPro"/>
</dbReference>
<dbReference type="GO" id="GO:0003899">
    <property type="term" value="F:DNA-directed RNA polymerase activity"/>
    <property type="evidence" value="ECO:0007669"/>
    <property type="project" value="UniProtKB-EC"/>
</dbReference>
<dbReference type="GO" id="GO:0046872">
    <property type="term" value="F:metal ion binding"/>
    <property type="evidence" value="ECO:0007669"/>
    <property type="project" value="UniProtKB-KW"/>
</dbReference>
<dbReference type="GO" id="GO:0032549">
    <property type="term" value="F:ribonucleoside binding"/>
    <property type="evidence" value="ECO:0007669"/>
    <property type="project" value="InterPro"/>
</dbReference>
<dbReference type="GO" id="GO:0006351">
    <property type="term" value="P:DNA-templated transcription"/>
    <property type="evidence" value="ECO:0007669"/>
    <property type="project" value="InterPro"/>
</dbReference>
<dbReference type="Gene3D" id="2.40.50.150">
    <property type="match status" value="1"/>
</dbReference>
<dbReference type="Gene3D" id="3.90.1100.10">
    <property type="match status" value="2"/>
</dbReference>
<dbReference type="Gene3D" id="2.40.270.10">
    <property type="entry name" value="DNA-directed RNA polymerase, subunit 2, domain 6"/>
    <property type="match status" value="1"/>
</dbReference>
<dbReference type="Gene3D" id="3.90.1800.10">
    <property type="entry name" value="RNA polymerase alpha subunit dimerisation domain"/>
    <property type="match status" value="1"/>
</dbReference>
<dbReference type="InterPro" id="IPR015712">
    <property type="entry name" value="DNA-dir_RNA_pol_su2"/>
</dbReference>
<dbReference type="InterPro" id="IPR007120">
    <property type="entry name" value="DNA-dir_RNAP_su2_dom"/>
</dbReference>
<dbReference type="InterPro" id="IPR037033">
    <property type="entry name" value="DNA-dir_RNAP_su2_hyb_sf"/>
</dbReference>
<dbReference type="InterPro" id="IPR024390">
    <property type="entry name" value="RNA_pol_132_poxvirus"/>
</dbReference>
<dbReference type="InterPro" id="IPR007121">
    <property type="entry name" value="RNA_pol_bsu_CS"/>
</dbReference>
<dbReference type="InterPro" id="IPR007645">
    <property type="entry name" value="RNA_pol_Rpb2_3"/>
</dbReference>
<dbReference type="InterPro" id="IPR007647">
    <property type="entry name" value="RNA_pol_Rpb2_5"/>
</dbReference>
<dbReference type="InterPro" id="IPR007641">
    <property type="entry name" value="RNA_pol_Rpb2_7"/>
</dbReference>
<dbReference type="InterPro" id="IPR014724">
    <property type="entry name" value="RNA_pol_RPB2_OB-fold"/>
</dbReference>
<dbReference type="PANTHER" id="PTHR20856">
    <property type="entry name" value="DNA-DIRECTED RNA POLYMERASE I SUBUNIT 2"/>
    <property type="match status" value="1"/>
</dbReference>
<dbReference type="Pfam" id="PF04565">
    <property type="entry name" value="RNA_pol_Rpb2_3"/>
    <property type="match status" value="1"/>
</dbReference>
<dbReference type="Pfam" id="PF04567">
    <property type="entry name" value="RNA_pol_Rpb2_5"/>
    <property type="match status" value="1"/>
</dbReference>
<dbReference type="Pfam" id="PF00562">
    <property type="entry name" value="RNA_pol_Rpb2_6"/>
    <property type="match status" value="1"/>
</dbReference>
<dbReference type="Pfam" id="PF04560">
    <property type="entry name" value="RNA_pol_Rpb2_7"/>
    <property type="match status" value="1"/>
</dbReference>
<dbReference type="Pfam" id="PF12415">
    <property type="entry name" value="rpo132"/>
    <property type="match status" value="1"/>
</dbReference>
<dbReference type="SUPFAM" id="SSF64484">
    <property type="entry name" value="beta and beta-prime subunits of DNA dependent RNA-polymerase"/>
    <property type="match status" value="1"/>
</dbReference>
<dbReference type="PROSITE" id="PS01166">
    <property type="entry name" value="RNA_POL_BETA"/>
    <property type="match status" value="1"/>
</dbReference>